<proteinExistence type="inferred from homology"/>
<accession>B2ILY0</accession>
<dbReference type="EMBL" id="CP001033">
    <property type="protein sequence ID" value="ACB89685.1"/>
    <property type="molecule type" value="Genomic_DNA"/>
</dbReference>
<dbReference type="RefSeq" id="WP_001025420.1">
    <property type="nucleotide sequence ID" value="NC_010582.1"/>
</dbReference>
<dbReference type="SMR" id="B2ILY0"/>
<dbReference type="KEGG" id="spw:SPCG_0433"/>
<dbReference type="HOGENOM" id="CLU_002794_2_1_9"/>
<dbReference type="GO" id="GO:0005829">
    <property type="term" value="C:cytosol"/>
    <property type="evidence" value="ECO:0007669"/>
    <property type="project" value="TreeGrafter"/>
</dbReference>
<dbReference type="GO" id="GO:0005525">
    <property type="term" value="F:GTP binding"/>
    <property type="evidence" value="ECO:0007669"/>
    <property type="project" value="UniProtKB-UniRule"/>
</dbReference>
<dbReference type="GO" id="GO:0003924">
    <property type="term" value="F:GTPase activity"/>
    <property type="evidence" value="ECO:0007669"/>
    <property type="project" value="InterPro"/>
</dbReference>
<dbReference type="GO" id="GO:0016150">
    <property type="term" value="F:translation release factor activity, codon nonspecific"/>
    <property type="evidence" value="ECO:0007669"/>
    <property type="project" value="TreeGrafter"/>
</dbReference>
<dbReference type="GO" id="GO:0016149">
    <property type="term" value="F:translation release factor activity, codon specific"/>
    <property type="evidence" value="ECO:0007669"/>
    <property type="project" value="UniProtKB-UniRule"/>
</dbReference>
<dbReference type="GO" id="GO:0006449">
    <property type="term" value="P:regulation of translational termination"/>
    <property type="evidence" value="ECO:0007669"/>
    <property type="project" value="UniProtKB-UniRule"/>
</dbReference>
<dbReference type="CDD" id="cd04169">
    <property type="entry name" value="RF3"/>
    <property type="match status" value="1"/>
</dbReference>
<dbReference type="CDD" id="cd16259">
    <property type="entry name" value="RF3_III"/>
    <property type="match status" value="1"/>
</dbReference>
<dbReference type="FunFam" id="2.40.30.10:FF:000040">
    <property type="entry name" value="Peptide chain release factor 3"/>
    <property type="match status" value="1"/>
</dbReference>
<dbReference type="FunFam" id="3.30.70.3280:FF:000001">
    <property type="entry name" value="Peptide chain release factor 3"/>
    <property type="match status" value="1"/>
</dbReference>
<dbReference type="FunFam" id="3.40.50.300:FF:000542">
    <property type="entry name" value="Peptide chain release factor 3"/>
    <property type="match status" value="1"/>
</dbReference>
<dbReference type="Gene3D" id="3.40.50.300">
    <property type="entry name" value="P-loop containing nucleotide triphosphate hydrolases"/>
    <property type="match status" value="1"/>
</dbReference>
<dbReference type="Gene3D" id="3.30.70.3280">
    <property type="entry name" value="Peptide chain release factor 3, domain III"/>
    <property type="match status" value="1"/>
</dbReference>
<dbReference type="Gene3D" id="2.40.30.10">
    <property type="entry name" value="Translation factors"/>
    <property type="match status" value="1"/>
</dbReference>
<dbReference type="HAMAP" id="MF_00072">
    <property type="entry name" value="Rel_fac_3"/>
    <property type="match status" value="1"/>
</dbReference>
<dbReference type="InterPro" id="IPR053905">
    <property type="entry name" value="EF-G-like_DII"/>
</dbReference>
<dbReference type="InterPro" id="IPR035647">
    <property type="entry name" value="EFG_III/V"/>
</dbReference>
<dbReference type="InterPro" id="IPR031157">
    <property type="entry name" value="G_TR_CS"/>
</dbReference>
<dbReference type="InterPro" id="IPR027417">
    <property type="entry name" value="P-loop_NTPase"/>
</dbReference>
<dbReference type="InterPro" id="IPR004548">
    <property type="entry name" value="PrfC"/>
</dbReference>
<dbReference type="InterPro" id="IPR032090">
    <property type="entry name" value="RF3_C"/>
</dbReference>
<dbReference type="InterPro" id="IPR038467">
    <property type="entry name" value="RF3_dom_3_sf"/>
</dbReference>
<dbReference type="InterPro" id="IPR041732">
    <property type="entry name" value="RF3_GTP-bd"/>
</dbReference>
<dbReference type="InterPro" id="IPR005225">
    <property type="entry name" value="Small_GTP-bd"/>
</dbReference>
<dbReference type="InterPro" id="IPR000795">
    <property type="entry name" value="T_Tr_GTP-bd_dom"/>
</dbReference>
<dbReference type="InterPro" id="IPR009000">
    <property type="entry name" value="Transl_B-barrel_sf"/>
</dbReference>
<dbReference type="NCBIfam" id="TIGR00503">
    <property type="entry name" value="prfC"/>
    <property type="match status" value="1"/>
</dbReference>
<dbReference type="NCBIfam" id="NF001964">
    <property type="entry name" value="PRK00741.1"/>
    <property type="match status" value="1"/>
</dbReference>
<dbReference type="NCBIfam" id="TIGR00231">
    <property type="entry name" value="small_GTP"/>
    <property type="match status" value="1"/>
</dbReference>
<dbReference type="PANTHER" id="PTHR43556">
    <property type="entry name" value="PEPTIDE CHAIN RELEASE FACTOR RF3"/>
    <property type="match status" value="1"/>
</dbReference>
<dbReference type="PANTHER" id="PTHR43556:SF2">
    <property type="entry name" value="PEPTIDE CHAIN RELEASE FACTOR RF3"/>
    <property type="match status" value="1"/>
</dbReference>
<dbReference type="Pfam" id="PF22042">
    <property type="entry name" value="EF-G_D2"/>
    <property type="match status" value="1"/>
</dbReference>
<dbReference type="Pfam" id="PF00009">
    <property type="entry name" value="GTP_EFTU"/>
    <property type="match status" value="1"/>
</dbReference>
<dbReference type="Pfam" id="PF16658">
    <property type="entry name" value="RF3_C"/>
    <property type="match status" value="1"/>
</dbReference>
<dbReference type="PRINTS" id="PR00315">
    <property type="entry name" value="ELONGATNFCT"/>
</dbReference>
<dbReference type="PRINTS" id="PR01037">
    <property type="entry name" value="TCRTETOQM"/>
</dbReference>
<dbReference type="SUPFAM" id="SSF54980">
    <property type="entry name" value="EF-G C-terminal domain-like"/>
    <property type="match status" value="1"/>
</dbReference>
<dbReference type="SUPFAM" id="SSF52540">
    <property type="entry name" value="P-loop containing nucleoside triphosphate hydrolases"/>
    <property type="match status" value="1"/>
</dbReference>
<dbReference type="SUPFAM" id="SSF50447">
    <property type="entry name" value="Translation proteins"/>
    <property type="match status" value="1"/>
</dbReference>
<dbReference type="PROSITE" id="PS00301">
    <property type="entry name" value="G_TR_1"/>
    <property type="match status" value="1"/>
</dbReference>
<dbReference type="PROSITE" id="PS51722">
    <property type="entry name" value="G_TR_2"/>
    <property type="match status" value="1"/>
</dbReference>
<reference key="1">
    <citation type="journal article" date="2009" name="BMC Genomics">
        <title>Genome evolution driven by host adaptations results in a more virulent and antimicrobial-resistant Streptococcus pneumoniae serotype 14.</title>
        <authorList>
            <person name="Ding F."/>
            <person name="Tang P."/>
            <person name="Hsu M.-H."/>
            <person name="Cui P."/>
            <person name="Hu S."/>
            <person name="Yu J."/>
            <person name="Chiu C.-H."/>
        </authorList>
    </citation>
    <scope>NUCLEOTIDE SEQUENCE [LARGE SCALE GENOMIC DNA]</scope>
    <source>
        <strain>CGSP14</strain>
    </source>
</reference>
<gene>
    <name evidence="1" type="primary">prfC</name>
    <name type="ordered locus">SPCG_0433</name>
</gene>
<organism>
    <name type="scientific">Streptococcus pneumoniae (strain CGSP14)</name>
    <dbReference type="NCBI Taxonomy" id="516950"/>
    <lineage>
        <taxon>Bacteria</taxon>
        <taxon>Bacillati</taxon>
        <taxon>Bacillota</taxon>
        <taxon>Bacilli</taxon>
        <taxon>Lactobacillales</taxon>
        <taxon>Streptococcaceae</taxon>
        <taxon>Streptococcus</taxon>
    </lineage>
</organism>
<sequence>MNIQEEIKKRRTFAIISHPDAGKTTITEQLLYFGGEIREAGTVKGKKTGTFAKSDWMDIEKQRGISVTSSVMQFDYDGKRVNILDTPGHEDFSEDTYRTLMAVDAAVMVVDSAKGIEAQTKKLFEVVKHRGIPVFTFMNKLDRDGREPLDLLQELEEILGIASYPMNWPIGMGKAFEGLYDLYNQRLELYKGDERFASLEDGDKLFGSNPFYEQVKDDIELLNEAGNEFSEEAILAGELTPVFFGSALTNFGVQTFLEIFLKFAPEPHGHKKTDGEIVDPYDKDFSGFVFKIQANMDPRHRDRIAFVRIVSGEFERGMSVNLPRTGKGAKLSNVTQFMAESRENVTNAVAGDIIGVYDTGTYQVGDTLTVGKNKFEFEPLPTFTPEIFMKVSAKNVMKQKSFHKGIEQLVQEGAVQLYKNYQTGEYMLGAVGQLQFEVFKHRMEGEYNAEVVMSPMGKKTVRWIKPEDLDERMSSSRNILAKDRFDQPVFLFENDFALRWFADKYPDVELEEKM</sequence>
<evidence type="ECO:0000255" key="1">
    <source>
        <dbReference type="HAMAP-Rule" id="MF_00072"/>
    </source>
</evidence>
<protein>
    <recommendedName>
        <fullName evidence="1">Peptide chain release factor 3</fullName>
        <shortName evidence="1">RF-3</shortName>
    </recommendedName>
</protein>
<keyword id="KW-0963">Cytoplasm</keyword>
<keyword id="KW-0342">GTP-binding</keyword>
<keyword id="KW-0547">Nucleotide-binding</keyword>
<keyword id="KW-0648">Protein biosynthesis</keyword>
<comment type="function">
    <text evidence="1">Increases the formation of ribosomal termination complexes and stimulates activities of RF-1 and RF-2. It binds guanine nucleotides and has strong preference for UGA stop codons. It may interact directly with the ribosome. The stimulation of RF-1 and RF-2 is significantly reduced by GTP and GDP, but not by GMP.</text>
</comment>
<comment type="subcellular location">
    <subcellularLocation>
        <location evidence="1">Cytoplasm</location>
    </subcellularLocation>
</comment>
<comment type="similarity">
    <text evidence="1">Belongs to the TRAFAC class translation factor GTPase superfamily. Classic translation factor GTPase family. PrfC subfamily.</text>
</comment>
<feature type="chain" id="PRO_1000092507" description="Peptide chain release factor 3">
    <location>
        <begin position="1"/>
        <end position="514"/>
    </location>
</feature>
<feature type="domain" description="tr-type G">
    <location>
        <begin position="8"/>
        <end position="268"/>
    </location>
</feature>
<feature type="binding site" evidence="1">
    <location>
        <begin position="17"/>
        <end position="24"/>
    </location>
    <ligand>
        <name>GTP</name>
        <dbReference type="ChEBI" id="CHEBI:37565"/>
    </ligand>
</feature>
<feature type="binding site" evidence="1">
    <location>
        <begin position="85"/>
        <end position="89"/>
    </location>
    <ligand>
        <name>GTP</name>
        <dbReference type="ChEBI" id="CHEBI:37565"/>
    </ligand>
</feature>
<feature type="binding site" evidence="1">
    <location>
        <begin position="139"/>
        <end position="142"/>
    </location>
    <ligand>
        <name>GTP</name>
        <dbReference type="ChEBI" id="CHEBI:37565"/>
    </ligand>
</feature>
<name>RF3_STRPS</name>